<accession>A9MXB2</accession>
<gene>
    <name evidence="1" type="primary">atpB</name>
    <name type="ordered locus">SPAB_04812</name>
</gene>
<evidence type="ECO:0000255" key="1">
    <source>
        <dbReference type="HAMAP-Rule" id="MF_01393"/>
    </source>
</evidence>
<feature type="chain" id="PRO_0000362442" description="ATP synthase subunit a">
    <location>
        <begin position="1"/>
        <end position="271"/>
    </location>
</feature>
<feature type="transmembrane region" description="Helical" evidence="1">
    <location>
        <begin position="38"/>
        <end position="58"/>
    </location>
</feature>
<feature type="transmembrane region" description="Helical" evidence="1">
    <location>
        <begin position="100"/>
        <end position="120"/>
    </location>
</feature>
<feature type="transmembrane region" description="Helical" evidence="1">
    <location>
        <begin position="146"/>
        <end position="166"/>
    </location>
</feature>
<feature type="transmembrane region" description="Helical" evidence="1">
    <location>
        <begin position="220"/>
        <end position="240"/>
    </location>
</feature>
<feature type="transmembrane region" description="Helical" evidence="1">
    <location>
        <begin position="242"/>
        <end position="262"/>
    </location>
</feature>
<comment type="function">
    <text evidence="1">Key component of the proton channel; it plays a direct role in the translocation of protons across the membrane.</text>
</comment>
<comment type="subunit">
    <text evidence="1">F-type ATPases have 2 components, CF(1) - the catalytic core - and CF(0) - the membrane proton channel. CF(1) has five subunits: alpha(3), beta(3), gamma(1), delta(1), epsilon(1). CF(0) has three main subunits: a(1), b(2) and c(9-12). The alpha and beta chains form an alternating ring which encloses part of the gamma chain. CF(1) is attached to CF(0) by a central stalk formed by the gamma and epsilon chains, while a peripheral stalk is formed by the delta and b chains.</text>
</comment>
<comment type="subcellular location">
    <subcellularLocation>
        <location evidence="1">Cell inner membrane</location>
        <topology evidence="1">Multi-pass membrane protein</topology>
    </subcellularLocation>
</comment>
<comment type="similarity">
    <text evidence="1">Belongs to the ATPase A chain family.</text>
</comment>
<sequence length="271" mass="30417">MASENMTPQEYIGHHLNNLQLDLRTFSLVDPQNPPATFWTLNIDSMFFSVVLGLLFLVMFRSVAKKATSGVPGKFQTAIELIVGFVHGSVKDMYHGKSKLIAPLALTIFVWVFLMNLMDLLPIDLLPYIAEHWLGLPATRVVPSADVNITLSMALGVFILILFYSIKMKGIGGFAKELTLQPFNHWAFIPVNLILEGVSLLSKPVSLGLRLFGNMYAGELIFILIAGLLPWWSQWILNVPWAIFHILIITLQAFIFMVLTIVYLSMASEEH</sequence>
<name>ATP6_SALPB</name>
<protein>
    <recommendedName>
        <fullName evidence="1">ATP synthase subunit a</fullName>
    </recommendedName>
    <alternativeName>
        <fullName evidence="1">ATP synthase F0 sector subunit a</fullName>
    </alternativeName>
    <alternativeName>
        <fullName evidence="1">F-ATPase subunit 6</fullName>
    </alternativeName>
</protein>
<keyword id="KW-0066">ATP synthesis</keyword>
<keyword id="KW-0997">Cell inner membrane</keyword>
<keyword id="KW-1003">Cell membrane</keyword>
<keyword id="KW-0138">CF(0)</keyword>
<keyword id="KW-0375">Hydrogen ion transport</keyword>
<keyword id="KW-0406">Ion transport</keyword>
<keyword id="KW-0472">Membrane</keyword>
<keyword id="KW-0812">Transmembrane</keyword>
<keyword id="KW-1133">Transmembrane helix</keyword>
<keyword id="KW-0813">Transport</keyword>
<dbReference type="EMBL" id="CP000886">
    <property type="protein sequence ID" value="ABX70123.1"/>
    <property type="molecule type" value="Genomic_DNA"/>
</dbReference>
<dbReference type="RefSeq" id="WP_000135632.1">
    <property type="nucleotide sequence ID" value="NC_010102.1"/>
</dbReference>
<dbReference type="SMR" id="A9MXB2"/>
<dbReference type="KEGG" id="spq:SPAB_04812"/>
<dbReference type="PATRIC" id="fig|1016998.12.peg.4527"/>
<dbReference type="HOGENOM" id="CLU_041018_1_0_6"/>
<dbReference type="BioCyc" id="SENT1016998:SPAB_RS19545-MONOMER"/>
<dbReference type="Proteomes" id="UP000008556">
    <property type="component" value="Chromosome"/>
</dbReference>
<dbReference type="GO" id="GO:0005886">
    <property type="term" value="C:plasma membrane"/>
    <property type="evidence" value="ECO:0007669"/>
    <property type="project" value="UniProtKB-SubCell"/>
</dbReference>
<dbReference type="GO" id="GO:0045259">
    <property type="term" value="C:proton-transporting ATP synthase complex"/>
    <property type="evidence" value="ECO:0007669"/>
    <property type="project" value="UniProtKB-KW"/>
</dbReference>
<dbReference type="GO" id="GO:0046933">
    <property type="term" value="F:proton-transporting ATP synthase activity, rotational mechanism"/>
    <property type="evidence" value="ECO:0007669"/>
    <property type="project" value="UniProtKB-UniRule"/>
</dbReference>
<dbReference type="GO" id="GO:0042777">
    <property type="term" value="P:proton motive force-driven plasma membrane ATP synthesis"/>
    <property type="evidence" value="ECO:0007669"/>
    <property type="project" value="TreeGrafter"/>
</dbReference>
<dbReference type="CDD" id="cd00310">
    <property type="entry name" value="ATP-synt_Fo_a_6"/>
    <property type="match status" value="1"/>
</dbReference>
<dbReference type="FunFam" id="1.20.120.220:FF:000002">
    <property type="entry name" value="ATP synthase subunit a"/>
    <property type="match status" value="1"/>
</dbReference>
<dbReference type="Gene3D" id="1.20.120.220">
    <property type="entry name" value="ATP synthase, F0 complex, subunit A"/>
    <property type="match status" value="1"/>
</dbReference>
<dbReference type="HAMAP" id="MF_01393">
    <property type="entry name" value="ATP_synth_a_bact"/>
    <property type="match status" value="1"/>
</dbReference>
<dbReference type="InterPro" id="IPR045082">
    <property type="entry name" value="ATP_syn_F0_a_bact/chloroplast"/>
</dbReference>
<dbReference type="InterPro" id="IPR000568">
    <property type="entry name" value="ATP_synth_F0_asu"/>
</dbReference>
<dbReference type="InterPro" id="IPR023011">
    <property type="entry name" value="ATP_synth_F0_asu_AS"/>
</dbReference>
<dbReference type="InterPro" id="IPR035908">
    <property type="entry name" value="F0_ATP_A_sf"/>
</dbReference>
<dbReference type="NCBIfam" id="TIGR01131">
    <property type="entry name" value="ATP_synt_6_or_A"/>
    <property type="match status" value="1"/>
</dbReference>
<dbReference type="NCBIfam" id="NF004477">
    <property type="entry name" value="PRK05815.1-1"/>
    <property type="match status" value="1"/>
</dbReference>
<dbReference type="PANTHER" id="PTHR42823">
    <property type="entry name" value="ATP SYNTHASE SUBUNIT A, CHLOROPLASTIC"/>
    <property type="match status" value="1"/>
</dbReference>
<dbReference type="PANTHER" id="PTHR42823:SF3">
    <property type="entry name" value="ATP SYNTHASE SUBUNIT A, CHLOROPLASTIC"/>
    <property type="match status" value="1"/>
</dbReference>
<dbReference type="Pfam" id="PF00119">
    <property type="entry name" value="ATP-synt_A"/>
    <property type="match status" value="1"/>
</dbReference>
<dbReference type="PRINTS" id="PR00123">
    <property type="entry name" value="ATPASEA"/>
</dbReference>
<dbReference type="SUPFAM" id="SSF81336">
    <property type="entry name" value="F1F0 ATP synthase subunit A"/>
    <property type="match status" value="1"/>
</dbReference>
<dbReference type="PROSITE" id="PS00449">
    <property type="entry name" value="ATPASE_A"/>
    <property type="match status" value="1"/>
</dbReference>
<reference key="1">
    <citation type="submission" date="2007-11" db="EMBL/GenBank/DDBJ databases">
        <authorList>
            <consortium name="The Salmonella enterica serovar Paratyphi B Genome Sequencing Project"/>
            <person name="McClelland M."/>
            <person name="Sanderson E.K."/>
            <person name="Porwollik S."/>
            <person name="Spieth J."/>
            <person name="Clifton W.S."/>
            <person name="Fulton R."/>
            <person name="Cordes M."/>
            <person name="Wollam A."/>
            <person name="Shah N."/>
            <person name="Pepin K."/>
            <person name="Bhonagiri V."/>
            <person name="Nash W."/>
            <person name="Johnson M."/>
            <person name="Thiruvilangam P."/>
            <person name="Wilson R."/>
        </authorList>
    </citation>
    <scope>NUCLEOTIDE SEQUENCE [LARGE SCALE GENOMIC DNA]</scope>
    <source>
        <strain>ATCC BAA-1250 / SPB7</strain>
    </source>
</reference>
<proteinExistence type="inferred from homology"/>
<organism>
    <name type="scientific">Salmonella paratyphi B (strain ATCC BAA-1250 / SPB7)</name>
    <dbReference type="NCBI Taxonomy" id="1016998"/>
    <lineage>
        <taxon>Bacteria</taxon>
        <taxon>Pseudomonadati</taxon>
        <taxon>Pseudomonadota</taxon>
        <taxon>Gammaproteobacteria</taxon>
        <taxon>Enterobacterales</taxon>
        <taxon>Enterobacteriaceae</taxon>
        <taxon>Salmonella</taxon>
    </lineage>
</organism>